<proteinExistence type="inferred from homology"/>
<accession>A9AIJ8</accession>
<organism>
    <name type="scientific">Burkholderia multivorans (strain ATCC 17616 / 249)</name>
    <dbReference type="NCBI Taxonomy" id="395019"/>
    <lineage>
        <taxon>Bacteria</taxon>
        <taxon>Pseudomonadati</taxon>
        <taxon>Pseudomonadota</taxon>
        <taxon>Betaproteobacteria</taxon>
        <taxon>Burkholderiales</taxon>
        <taxon>Burkholderiaceae</taxon>
        <taxon>Burkholderia</taxon>
        <taxon>Burkholderia cepacia complex</taxon>
    </lineage>
</organism>
<comment type="function">
    <text evidence="2">Transaldolase is important for the balance of metabolites in the pentose-phosphate pathway.</text>
</comment>
<comment type="catalytic activity">
    <reaction evidence="2">
        <text>D-sedoheptulose 7-phosphate + D-glyceraldehyde 3-phosphate = D-erythrose 4-phosphate + beta-D-fructose 6-phosphate</text>
        <dbReference type="Rhea" id="RHEA:17053"/>
        <dbReference type="ChEBI" id="CHEBI:16897"/>
        <dbReference type="ChEBI" id="CHEBI:57483"/>
        <dbReference type="ChEBI" id="CHEBI:57634"/>
        <dbReference type="ChEBI" id="CHEBI:59776"/>
        <dbReference type="EC" id="2.2.1.2"/>
    </reaction>
</comment>
<comment type="pathway">
    <text evidence="2">Carbohydrate degradation; pentose phosphate pathway; D-glyceraldehyde 3-phosphate and beta-D-fructose 6-phosphate from D-ribose 5-phosphate and D-xylulose 5-phosphate (non-oxidative stage): step 2/3.</text>
</comment>
<comment type="subunit">
    <text evidence="1">Homodimer.</text>
</comment>
<comment type="subcellular location">
    <subcellularLocation>
        <location evidence="2">Cytoplasm</location>
    </subcellularLocation>
</comment>
<comment type="similarity">
    <text evidence="2">Belongs to the transaldolase family. Type 1 subfamily.</text>
</comment>
<feature type="chain" id="PRO_1000126240" description="Transaldolase">
    <location>
        <begin position="1"/>
        <end position="317"/>
    </location>
</feature>
<feature type="active site" description="Schiff-base intermediate with substrate" evidence="2">
    <location>
        <position position="126"/>
    </location>
</feature>
<name>TAL_BURM1</name>
<protein>
    <recommendedName>
        <fullName evidence="2">Transaldolase</fullName>
        <ecNumber evidence="2">2.2.1.2</ecNumber>
    </recommendedName>
</protein>
<dbReference type="EC" id="2.2.1.2" evidence="2"/>
<dbReference type="EMBL" id="CP000868">
    <property type="protein sequence ID" value="ABX14633.1"/>
    <property type="molecule type" value="Genomic_DNA"/>
</dbReference>
<dbReference type="EMBL" id="AP009385">
    <property type="protein sequence ID" value="BAG44217.1"/>
    <property type="molecule type" value="Genomic_DNA"/>
</dbReference>
<dbReference type="RefSeq" id="WP_006413476.1">
    <property type="nucleotide sequence ID" value="NC_010084.1"/>
</dbReference>
<dbReference type="SMR" id="A9AIJ8"/>
<dbReference type="STRING" id="395019.BMULJ_02322"/>
<dbReference type="KEGG" id="bmj:BMULJ_02322"/>
<dbReference type="KEGG" id="bmu:Bmul_0942"/>
<dbReference type="eggNOG" id="COG0176">
    <property type="taxonomic scope" value="Bacteria"/>
</dbReference>
<dbReference type="HOGENOM" id="CLU_047470_0_1_4"/>
<dbReference type="UniPathway" id="UPA00115">
    <property type="reaction ID" value="UER00414"/>
</dbReference>
<dbReference type="Proteomes" id="UP000008815">
    <property type="component" value="Chromosome 1"/>
</dbReference>
<dbReference type="GO" id="GO:0005737">
    <property type="term" value="C:cytoplasm"/>
    <property type="evidence" value="ECO:0007669"/>
    <property type="project" value="UniProtKB-SubCell"/>
</dbReference>
<dbReference type="GO" id="GO:0004801">
    <property type="term" value="F:transaldolase activity"/>
    <property type="evidence" value="ECO:0000250"/>
    <property type="project" value="UniProtKB"/>
</dbReference>
<dbReference type="GO" id="GO:0005975">
    <property type="term" value="P:carbohydrate metabolic process"/>
    <property type="evidence" value="ECO:0007669"/>
    <property type="project" value="InterPro"/>
</dbReference>
<dbReference type="GO" id="GO:0006098">
    <property type="term" value="P:pentose-phosphate shunt"/>
    <property type="evidence" value="ECO:0007669"/>
    <property type="project" value="UniProtKB-UniRule"/>
</dbReference>
<dbReference type="CDD" id="cd00957">
    <property type="entry name" value="Transaldolase_TalAB"/>
    <property type="match status" value="1"/>
</dbReference>
<dbReference type="FunFam" id="3.20.20.70:FF:000002">
    <property type="entry name" value="Transaldolase"/>
    <property type="match status" value="1"/>
</dbReference>
<dbReference type="Gene3D" id="3.20.20.70">
    <property type="entry name" value="Aldolase class I"/>
    <property type="match status" value="1"/>
</dbReference>
<dbReference type="HAMAP" id="MF_00492">
    <property type="entry name" value="Transaldolase_1"/>
    <property type="match status" value="1"/>
</dbReference>
<dbReference type="InterPro" id="IPR013785">
    <property type="entry name" value="Aldolase_TIM"/>
</dbReference>
<dbReference type="InterPro" id="IPR001585">
    <property type="entry name" value="TAL/FSA"/>
</dbReference>
<dbReference type="InterPro" id="IPR004730">
    <property type="entry name" value="Transaldolase_1"/>
</dbReference>
<dbReference type="InterPro" id="IPR018225">
    <property type="entry name" value="Transaldolase_AS"/>
</dbReference>
<dbReference type="NCBIfam" id="NF009001">
    <property type="entry name" value="PRK12346.1"/>
    <property type="match status" value="1"/>
</dbReference>
<dbReference type="NCBIfam" id="TIGR00874">
    <property type="entry name" value="talAB"/>
    <property type="match status" value="1"/>
</dbReference>
<dbReference type="PANTHER" id="PTHR10683">
    <property type="entry name" value="TRANSALDOLASE"/>
    <property type="match status" value="1"/>
</dbReference>
<dbReference type="PANTHER" id="PTHR10683:SF18">
    <property type="entry name" value="TRANSALDOLASE"/>
    <property type="match status" value="1"/>
</dbReference>
<dbReference type="Pfam" id="PF00923">
    <property type="entry name" value="TAL_FSA"/>
    <property type="match status" value="1"/>
</dbReference>
<dbReference type="SUPFAM" id="SSF51569">
    <property type="entry name" value="Aldolase"/>
    <property type="match status" value="1"/>
</dbReference>
<dbReference type="PROSITE" id="PS01054">
    <property type="entry name" value="TRANSALDOLASE_1"/>
    <property type="match status" value="1"/>
</dbReference>
<dbReference type="PROSITE" id="PS00958">
    <property type="entry name" value="TRANSALDOLASE_2"/>
    <property type="match status" value="1"/>
</dbReference>
<evidence type="ECO:0000250" key="1"/>
<evidence type="ECO:0000255" key="2">
    <source>
        <dbReference type="HAMAP-Rule" id="MF_00492"/>
    </source>
</evidence>
<gene>
    <name evidence="2" type="primary">tal</name>
    <name type="ordered locus">Bmul_0942</name>
    <name type="ordered locus">BMULJ_02322</name>
</gene>
<sequence>MTTALDQLKQYTTVVADTGDFQQLAQYQPQDATTNPSLILKAVQKDAYKPILEKTVRDHRNESTDFIIDRLLIAFGTEILKIIPGRVSTEVDARLSFDAKRSIDKAHELIKLYEAAGIERDRILIKLASTWEGIRAAETLQKEGIKCNMTLLFSLVQAAACAEAGAQLISPFVGRIYDWYKKQAGADWDEAKNGGANDPGVQSVRRIYTYYKTFGYKTEVMGASFRTTSQIVELAGCDLLTISPDLLQKLHDSNETVTRKLSPDALHDKPTERVAIDEASFRFQLNDEAMATEKLAEGIRVFAADAVKLEKLIEALR</sequence>
<reference key="1">
    <citation type="submission" date="2007-10" db="EMBL/GenBank/DDBJ databases">
        <title>Complete sequence of chromosome 1 of Burkholderia multivorans ATCC 17616.</title>
        <authorList>
            <person name="Copeland A."/>
            <person name="Lucas S."/>
            <person name="Lapidus A."/>
            <person name="Barry K."/>
            <person name="Glavina del Rio T."/>
            <person name="Dalin E."/>
            <person name="Tice H."/>
            <person name="Pitluck S."/>
            <person name="Chain P."/>
            <person name="Malfatti S."/>
            <person name="Shin M."/>
            <person name="Vergez L."/>
            <person name="Schmutz J."/>
            <person name="Larimer F."/>
            <person name="Land M."/>
            <person name="Hauser L."/>
            <person name="Kyrpides N."/>
            <person name="Kim E."/>
            <person name="Tiedje J."/>
            <person name="Richardson P."/>
        </authorList>
    </citation>
    <scope>NUCLEOTIDE SEQUENCE [LARGE SCALE GENOMIC DNA]</scope>
    <source>
        <strain>ATCC 17616 / 249</strain>
    </source>
</reference>
<reference key="2">
    <citation type="submission" date="2007-04" db="EMBL/GenBank/DDBJ databases">
        <title>Complete genome sequence of Burkholderia multivorans ATCC 17616.</title>
        <authorList>
            <person name="Ohtsubo Y."/>
            <person name="Yamashita A."/>
            <person name="Kurokawa K."/>
            <person name="Takami H."/>
            <person name="Yuhara S."/>
            <person name="Nishiyama E."/>
            <person name="Endo R."/>
            <person name="Miyazaki R."/>
            <person name="Ono A."/>
            <person name="Yano K."/>
            <person name="Ito M."/>
            <person name="Sota M."/>
            <person name="Yuji N."/>
            <person name="Hattori M."/>
            <person name="Tsuda M."/>
        </authorList>
    </citation>
    <scope>NUCLEOTIDE SEQUENCE [LARGE SCALE GENOMIC DNA]</scope>
    <source>
        <strain>ATCC 17616 / 249</strain>
    </source>
</reference>
<keyword id="KW-0963">Cytoplasm</keyword>
<keyword id="KW-0570">Pentose shunt</keyword>
<keyword id="KW-1185">Reference proteome</keyword>
<keyword id="KW-0704">Schiff base</keyword>
<keyword id="KW-0808">Transferase</keyword>